<organism>
    <name type="scientific">Pseudomonas fluorescens (strain ATCC BAA-477 / NRRL B-23932 / Pf-5)</name>
    <dbReference type="NCBI Taxonomy" id="220664"/>
    <lineage>
        <taxon>Bacteria</taxon>
        <taxon>Pseudomonadati</taxon>
        <taxon>Pseudomonadota</taxon>
        <taxon>Gammaproteobacteria</taxon>
        <taxon>Pseudomonadales</taxon>
        <taxon>Pseudomonadaceae</taxon>
        <taxon>Pseudomonas</taxon>
    </lineage>
</organism>
<evidence type="ECO:0000255" key="1">
    <source>
        <dbReference type="HAMAP-Rule" id="MF_00110"/>
    </source>
</evidence>
<keyword id="KW-0028">Amino-acid biosynthesis</keyword>
<keyword id="KW-0057">Aromatic amino acid biosynthesis</keyword>
<keyword id="KW-0170">Cobalt</keyword>
<keyword id="KW-0963">Cytoplasm</keyword>
<keyword id="KW-0456">Lyase</keyword>
<keyword id="KW-0479">Metal-binding</keyword>
<keyword id="KW-0520">NAD</keyword>
<keyword id="KW-0547">Nucleotide-binding</keyword>
<keyword id="KW-0862">Zinc</keyword>
<proteinExistence type="inferred from homology"/>
<protein>
    <recommendedName>
        <fullName evidence="1">3-dehydroquinate synthase</fullName>
        <shortName evidence="1">DHQS</shortName>
        <ecNumber evidence="1">4.2.3.4</ecNumber>
    </recommendedName>
</protein>
<feature type="chain" id="PRO_0000231114" description="3-dehydroquinate synthase">
    <location>
        <begin position="1"/>
        <end position="366"/>
    </location>
</feature>
<feature type="binding site" evidence="1">
    <location>
        <begin position="69"/>
        <end position="74"/>
    </location>
    <ligand>
        <name>NAD(+)</name>
        <dbReference type="ChEBI" id="CHEBI:57540"/>
    </ligand>
</feature>
<feature type="binding site" evidence="1">
    <location>
        <begin position="103"/>
        <end position="107"/>
    </location>
    <ligand>
        <name>NAD(+)</name>
        <dbReference type="ChEBI" id="CHEBI:57540"/>
    </ligand>
</feature>
<feature type="binding site" evidence="1">
    <location>
        <begin position="127"/>
        <end position="128"/>
    </location>
    <ligand>
        <name>NAD(+)</name>
        <dbReference type="ChEBI" id="CHEBI:57540"/>
    </ligand>
</feature>
<feature type="binding site" evidence="1">
    <location>
        <position position="140"/>
    </location>
    <ligand>
        <name>NAD(+)</name>
        <dbReference type="ChEBI" id="CHEBI:57540"/>
    </ligand>
</feature>
<feature type="binding site" evidence="1">
    <location>
        <position position="149"/>
    </location>
    <ligand>
        <name>NAD(+)</name>
        <dbReference type="ChEBI" id="CHEBI:57540"/>
    </ligand>
</feature>
<feature type="binding site" evidence="1">
    <location>
        <position position="182"/>
    </location>
    <ligand>
        <name>Zn(2+)</name>
        <dbReference type="ChEBI" id="CHEBI:29105"/>
    </ligand>
</feature>
<feature type="binding site" evidence="1">
    <location>
        <position position="245"/>
    </location>
    <ligand>
        <name>Zn(2+)</name>
        <dbReference type="ChEBI" id="CHEBI:29105"/>
    </ligand>
</feature>
<feature type="binding site" evidence="1">
    <location>
        <position position="262"/>
    </location>
    <ligand>
        <name>Zn(2+)</name>
        <dbReference type="ChEBI" id="CHEBI:29105"/>
    </ligand>
</feature>
<comment type="function">
    <text evidence="1">Catalyzes the conversion of 3-deoxy-D-arabino-heptulosonate 7-phosphate (DAHP) to dehydroquinate (DHQ).</text>
</comment>
<comment type="catalytic activity">
    <reaction evidence="1">
        <text>7-phospho-2-dehydro-3-deoxy-D-arabino-heptonate = 3-dehydroquinate + phosphate</text>
        <dbReference type="Rhea" id="RHEA:21968"/>
        <dbReference type="ChEBI" id="CHEBI:32364"/>
        <dbReference type="ChEBI" id="CHEBI:43474"/>
        <dbReference type="ChEBI" id="CHEBI:58394"/>
        <dbReference type="EC" id="4.2.3.4"/>
    </reaction>
</comment>
<comment type="cofactor">
    <cofactor evidence="1">
        <name>Co(2+)</name>
        <dbReference type="ChEBI" id="CHEBI:48828"/>
    </cofactor>
    <cofactor evidence="1">
        <name>Zn(2+)</name>
        <dbReference type="ChEBI" id="CHEBI:29105"/>
    </cofactor>
    <text evidence="1">Binds 1 divalent metal cation per subunit. Can use either Co(2+) or Zn(2+).</text>
</comment>
<comment type="cofactor">
    <cofactor evidence="1">
        <name>NAD(+)</name>
        <dbReference type="ChEBI" id="CHEBI:57540"/>
    </cofactor>
</comment>
<comment type="pathway">
    <text evidence="1">Metabolic intermediate biosynthesis; chorismate biosynthesis; chorismate from D-erythrose 4-phosphate and phosphoenolpyruvate: step 2/7.</text>
</comment>
<comment type="subcellular location">
    <subcellularLocation>
        <location evidence="1">Cytoplasm</location>
    </subcellularLocation>
</comment>
<comment type="similarity">
    <text evidence="1">Belongs to the sugar phosphate cyclases superfamily. Dehydroquinate synthase family.</text>
</comment>
<gene>
    <name evidence="1" type="primary">aroB</name>
    <name type="ordered locus">PFL_0451</name>
</gene>
<name>AROB_PSEF5</name>
<accession>Q4KJI8</accession>
<reference key="1">
    <citation type="journal article" date="2005" name="Nat. Biotechnol.">
        <title>Complete genome sequence of the plant commensal Pseudomonas fluorescens Pf-5.</title>
        <authorList>
            <person name="Paulsen I.T."/>
            <person name="Press C.M."/>
            <person name="Ravel J."/>
            <person name="Kobayashi D.Y."/>
            <person name="Myers G.S.A."/>
            <person name="Mavrodi D.V."/>
            <person name="DeBoy R.T."/>
            <person name="Seshadri R."/>
            <person name="Ren Q."/>
            <person name="Madupu R."/>
            <person name="Dodson R.J."/>
            <person name="Durkin A.S."/>
            <person name="Brinkac L.M."/>
            <person name="Daugherty S.C."/>
            <person name="Sullivan S.A."/>
            <person name="Rosovitz M.J."/>
            <person name="Gwinn M.L."/>
            <person name="Zhou L."/>
            <person name="Schneider D.J."/>
            <person name="Cartinhour S.W."/>
            <person name="Nelson W.C."/>
            <person name="Weidman J."/>
            <person name="Watkins K."/>
            <person name="Tran K."/>
            <person name="Khouri H."/>
            <person name="Pierson E.A."/>
            <person name="Pierson L.S. III"/>
            <person name="Thomashow L.S."/>
            <person name="Loper J.E."/>
        </authorList>
    </citation>
    <scope>NUCLEOTIDE SEQUENCE [LARGE SCALE GENOMIC DNA]</scope>
    <source>
        <strain>ATCC BAA-477 / NRRL B-23932 / Pf-5</strain>
    </source>
</reference>
<dbReference type="EC" id="4.2.3.4" evidence="1"/>
<dbReference type="EMBL" id="CP000076">
    <property type="protein sequence ID" value="AAY95860.1"/>
    <property type="molecule type" value="Genomic_DNA"/>
</dbReference>
<dbReference type="RefSeq" id="WP_011058825.1">
    <property type="nucleotide sequence ID" value="NC_004129.6"/>
</dbReference>
<dbReference type="SMR" id="Q4KJI8"/>
<dbReference type="STRING" id="220664.PFL_0451"/>
<dbReference type="KEGG" id="pfl:PFL_0451"/>
<dbReference type="PATRIC" id="fig|220664.5.peg.461"/>
<dbReference type="eggNOG" id="COG0337">
    <property type="taxonomic scope" value="Bacteria"/>
</dbReference>
<dbReference type="HOGENOM" id="CLU_001201_0_2_6"/>
<dbReference type="UniPathway" id="UPA00053">
    <property type="reaction ID" value="UER00085"/>
</dbReference>
<dbReference type="Proteomes" id="UP000008540">
    <property type="component" value="Chromosome"/>
</dbReference>
<dbReference type="GO" id="GO:0005737">
    <property type="term" value="C:cytoplasm"/>
    <property type="evidence" value="ECO:0007669"/>
    <property type="project" value="UniProtKB-SubCell"/>
</dbReference>
<dbReference type="GO" id="GO:0003856">
    <property type="term" value="F:3-dehydroquinate synthase activity"/>
    <property type="evidence" value="ECO:0007669"/>
    <property type="project" value="UniProtKB-UniRule"/>
</dbReference>
<dbReference type="GO" id="GO:0046872">
    <property type="term" value="F:metal ion binding"/>
    <property type="evidence" value="ECO:0007669"/>
    <property type="project" value="UniProtKB-KW"/>
</dbReference>
<dbReference type="GO" id="GO:0000166">
    <property type="term" value="F:nucleotide binding"/>
    <property type="evidence" value="ECO:0007669"/>
    <property type="project" value="UniProtKB-KW"/>
</dbReference>
<dbReference type="GO" id="GO:0008652">
    <property type="term" value="P:amino acid biosynthetic process"/>
    <property type="evidence" value="ECO:0007669"/>
    <property type="project" value="UniProtKB-KW"/>
</dbReference>
<dbReference type="GO" id="GO:0009073">
    <property type="term" value="P:aromatic amino acid family biosynthetic process"/>
    <property type="evidence" value="ECO:0007669"/>
    <property type="project" value="UniProtKB-KW"/>
</dbReference>
<dbReference type="GO" id="GO:0009423">
    <property type="term" value="P:chorismate biosynthetic process"/>
    <property type="evidence" value="ECO:0007669"/>
    <property type="project" value="UniProtKB-UniRule"/>
</dbReference>
<dbReference type="CDD" id="cd08195">
    <property type="entry name" value="DHQS"/>
    <property type="match status" value="1"/>
</dbReference>
<dbReference type="FunFam" id="1.20.1090.10:FF:000002">
    <property type="entry name" value="3-dehydroquinate synthase"/>
    <property type="match status" value="1"/>
</dbReference>
<dbReference type="FunFam" id="3.40.50.1970:FF:000001">
    <property type="entry name" value="3-dehydroquinate synthase"/>
    <property type="match status" value="1"/>
</dbReference>
<dbReference type="Gene3D" id="3.40.50.1970">
    <property type="match status" value="1"/>
</dbReference>
<dbReference type="Gene3D" id="1.20.1090.10">
    <property type="entry name" value="Dehydroquinate synthase-like - alpha domain"/>
    <property type="match status" value="1"/>
</dbReference>
<dbReference type="HAMAP" id="MF_00110">
    <property type="entry name" value="DHQ_synthase"/>
    <property type="match status" value="1"/>
</dbReference>
<dbReference type="InterPro" id="IPR050071">
    <property type="entry name" value="Dehydroquinate_synthase"/>
</dbReference>
<dbReference type="InterPro" id="IPR016037">
    <property type="entry name" value="DHQ_synth_AroB"/>
</dbReference>
<dbReference type="InterPro" id="IPR030963">
    <property type="entry name" value="DHQ_synth_fam"/>
</dbReference>
<dbReference type="InterPro" id="IPR030960">
    <property type="entry name" value="DHQS/DOIS_N"/>
</dbReference>
<dbReference type="InterPro" id="IPR056179">
    <property type="entry name" value="DHQS_C"/>
</dbReference>
<dbReference type="NCBIfam" id="TIGR01357">
    <property type="entry name" value="aroB"/>
    <property type="match status" value="1"/>
</dbReference>
<dbReference type="PANTHER" id="PTHR43622">
    <property type="entry name" value="3-DEHYDROQUINATE SYNTHASE"/>
    <property type="match status" value="1"/>
</dbReference>
<dbReference type="PANTHER" id="PTHR43622:SF7">
    <property type="entry name" value="3-DEHYDROQUINATE SYNTHASE, CHLOROPLASTIC"/>
    <property type="match status" value="1"/>
</dbReference>
<dbReference type="Pfam" id="PF01761">
    <property type="entry name" value="DHQ_synthase"/>
    <property type="match status" value="1"/>
</dbReference>
<dbReference type="Pfam" id="PF24621">
    <property type="entry name" value="DHQS_C"/>
    <property type="match status" value="1"/>
</dbReference>
<dbReference type="PIRSF" id="PIRSF001455">
    <property type="entry name" value="DHQ_synth"/>
    <property type="match status" value="1"/>
</dbReference>
<dbReference type="SUPFAM" id="SSF56796">
    <property type="entry name" value="Dehydroquinate synthase-like"/>
    <property type="match status" value="1"/>
</dbReference>
<sequence>MQTLKVDLGERSYPIHIGEGLLDQPELLVPHIAGRQVAIISNETVAPLYLERLTRSLGQFSVISVVLPDGEAYKNWETLQLIFDGLLTARHDRRTTIIALGGGVIGDMAGFAAACYQRGVDFIQIPTTLLSQVDSSVGGKTGINHPLGKNMVGAFYQPNVVLIDTTSLNTLPSRELSAGLAEVIKYGLICDEPFLTWLEENVDRLRALDQQALTYAIERSCAAKAAVVGADERESGVRATLNLGHTFGHAIETHMGYGVWLHGEAVAAGTVMALEMSARLGWITSQERDRGIRLFQRAGLPVIPPEEMSEADFLEHMAIDKKVIDGRLRLVLLRRMGEAVVTDDYPKEVLQATLGADYRALAQLKG</sequence>